<keyword id="KW-0067">ATP-binding</keyword>
<keyword id="KW-0143">Chaperone</keyword>
<keyword id="KW-0963">Cytoplasm</keyword>
<keyword id="KW-0547">Nucleotide-binding</keyword>
<keyword id="KW-1185">Reference proteome</keyword>
<keyword id="KW-0346">Stress response</keyword>
<sequence length="683" mass="74830">MSEEKAKSNTSRAIGIDLGTTFSCVAGYISGKVEVITNQDGERTTPSVVSFDENNCTVVGTAARNMVGSDPMSVIFDAKRMIGREFDDPKIQNAIKGWPFKVVRYNHREKREEPNKVSEGSNSYDNIAIKITRNGKTNYYAPVEISGKVLLYLKNAAEARLGGTVDSAVVTVPAYFEEPQKDVTKAAATIAGFDPNKVRLLAEPTAAAMAYGHIQTQKNANFSAKEDVLVFDLGGGTFDVSLLDFEFNGAAGSLGIVKAIDGDTFLGGQDFDNLLINYCISEFLKKNSSIKQSDLKESALLRLRAECTRVKAVLSSATSSAIYVPCFHMTDDLNVQITRARFELLCDHLFRRCMERTKGCLLRSAGVPEVEYSADGSKLLLNPSLEKTLNEVKNNISKVLLVGGSSRIPKIKALLAEYFGAHKVIEPVNADEAVAYGAAYQAASIYSDAVDAGSSLLLIDCVPLNLSIETAGGVATALIHCGDNIPIKKTETFTTYEDNQTAVTINVYEGNRAMCKDNKKIGSFNLDGIIAAPRGVPKIEVTFDVDHNGILIVTAQDKQTGKENQIKVTNSQNRLSQEEIERMTKEARDNEQRDNETKEKMGKRMAFDQAISSFKAFVEKANNISEEKKSESLRVIKENEEWLSNAQRPEDFEVEELERRSNDFQSFTSDIMKDVGMGGAPAA</sequence>
<name>HSP7B_ENCCU</name>
<dbReference type="EMBL" id="AL590443">
    <property type="protein sequence ID" value="CAD26198.1"/>
    <property type="molecule type" value="Genomic_DNA"/>
</dbReference>
<dbReference type="RefSeq" id="NP_597563.1">
    <property type="nucleotide sequence ID" value="NM_001040927.1"/>
</dbReference>
<dbReference type="SMR" id="Q8SSB1"/>
<dbReference type="STRING" id="284813.Q8SSB1"/>
<dbReference type="GeneID" id="858725"/>
<dbReference type="KEGG" id="ecu:ECU03_0520"/>
<dbReference type="VEuPathDB" id="MicrosporidiaDB:ECU03_0520"/>
<dbReference type="HOGENOM" id="CLU_005965_2_1_1"/>
<dbReference type="InParanoid" id="Q8SSB1"/>
<dbReference type="OMA" id="VCKPIVT"/>
<dbReference type="OrthoDB" id="2401965at2759"/>
<dbReference type="Proteomes" id="UP000000819">
    <property type="component" value="Chromosome III"/>
</dbReference>
<dbReference type="GO" id="GO:0005737">
    <property type="term" value="C:cytoplasm"/>
    <property type="evidence" value="ECO:0007669"/>
    <property type="project" value="UniProtKB-SubCell"/>
</dbReference>
<dbReference type="GO" id="GO:0005524">
    <property type="term" value="F:ATP binding"/>
    <property type="evidence" value="ECO:0007669"/>
    <property type="project" value="UniProtKB-KW"/>
</dbReference>
<dbReference type="GO" id="GO:0140662">
    <property type="term" value="F:ATP-dependent protein folding chaperone"/>
    <property type="evidence" value="ECO:0007669"/>
    <property type="project" value="InterPro"/>
</dbReference>
<dbReference type="CDD" id="cd24028">
    <property type="entry name" value="ASKHA_NBD_HSP70_HSPA1-like"/>
    <property type="match status" value="1"/>
</dbReference>
<dbReference type="FunFam" id="2.60.34.10:FF:000012">
    <property type="entry name" value="Heat shock 70 kDa protein"/>
    <property type="match status" value="1"/>
</dbReference>
<dbReference type="FunFam" id="3.90.640.10:FF:000010">
    <property type="entry name" value="heat shock 70 kDa protein 14"/>
    <property type="match status" value="1"/>
</dbReference>
<dbReference type="FunFam" id="3.30.30.30:FF:000005">
    <property type="entry name" value="Heat shock protein ssb1"/>
    <property type="match status" value="1"/>
</dbReference>
<dbReference type="Gene3D" id="1.20.1270.10">
    <property type="match status" value="1"/>
</dbReference>
<dbReference type="Gene3D" id="3.30.420.40">
    <property type="match status" value="2"/>
</dbReference>
<dbReference type="Gene3D" id="3.90.640.10">
    <property type="entry name" value="Actin, Chain A, domain 4"/>
    <property type="match status" value="1"/>
</dbReference>
<dbReference type="Gene3D" id="2.60.34.10">
    <property type="entry name" value="Substrate Binding Domain Of DNAk, Chain A, domain 1"/>
    <property type="match status" value="1"/>
</dbReference>
<dbReference type="InterPro" id="IPR043129">
    <property type="entry name" value="ATPase_NBD"/>
</dbReference>
<dbReference type="InterPro" id="IPR018181">
    <property type="entry name" value="Heat_shock_70_CS"/>
</dbReference>
<dbReference type="InterPro" id="IPR029048">
    <property type="entry name" value="HSP70_C_sf"/>
</dbReference>
<dbReference type="InterPro" id="IPR029047">
    <property type="entry name" value="HSP70_peptide-bd_sf"/>
</dbReference>
<dbReference type="InterPro" id="IPR013126">
    <property type="entry name" value="Hsp_70_fam"/>
</dbReference>
<dbReference type="PANTHER" id="PTHR19375">
    <property type="entry name" value="HEAT SHOCK PROTEIN 70KDA"/>
    <property type="match status" value="1"/>
</dbReference>
<dbReference type="Pfam" id="PF00012">
    <property type="entry name" value="HSP70"/>
    <property type="match status" value="2"/>
</dbReference>
<dbReference type="PRINTS" id="PR00301">
    <property type="entry name" value="HEATSHOCK70"/>
</dbReference>
<dbReference type="SUPFAM" id="SSF53067">
    <property type="entry name" value="Actin-like ATPase domain"/>
    <property type="match status" value="2"/>
</dbReference>
<dbReference type="SUPFAM" id="SSF100920">
    <property type="entry name" value="Heat shock protein 70kD (HSP70), peptide-binding domain"/>
    <property type="match status" value="1"/>
</dbReference>
<dbReference type="PROSITE" id="PS00297">
    <property type="entry name" value="HSP70_1"/>
    <property type="match status" value="1"/>
</dbReference>
<dbReference type="PROSITE" id="PS00329">
    <property type="entry name" value="HSP70_2"/>
    <property type="match status" value="1"/>
</dbReference>
<dbReference type="PROSITE" id="PS01036">
    <property type="entry name" value="HSP70_3"/>
    <property type="match status" value="1"/>
</dbReference>
<comment type="subcellular location">
    <subcellularLocation>
        <location evidence="1">Cytoplasm</location>
    </subcellularLocation>
</comment>
<comment type="developmental stage">
    <text evidence="2">Expressed in late sporogonial stages.</text>
</comment>
<comment type="similarity">
    <text evidence="3">Belongs to the heat shock protein 70 family.</text>
</comment>
<reference key="1">
    <citation type="journal article" date="2001" name="Nature">
        <title>Genome sequence and gene compaction of the eukaryote parasite Encephalitozoon cuniculi.</title>
        <authorList>
            <person name="Katinka M.D."/>
            <person name="Duprat S."/>
            <person name="Cornillot E."/>
            <person name="Metenier G."/>
            <person name="Thomarat F."/>
            <person name="Prensier G."/>
            <person name="Barbe V."/>
            <person name="Peyretaillade E."/>
            <person name="Brottier P."/>
            <person name="Wincker P."/>
            <person name="Delbac F."/>
            <person name="El Alaoui H."/>
            <person name="Peyret P."/>
            <person name="Saurin W."/>
            <person name="Gouy M."/>
            <person name="Weissenbach J."/>
            <person name="Vivares C.P."/>
        </authorList>
    </citation>
    <scope>NUCLEOTIDE SEQUENCE [LARGE SCALE GENOMIC DNA]</scope>
    <source>
        <strain>GB-M1</strain>
    </source>
</reference>
<reference key="2">
    <citation type="journal article" date="2006" name="Proteomics">
        <title>Proteomic analysis of the eukaryotic parasite Encephalitozoon cuniculi (microsporidia): a reference map for proteins expressed in late sporogonial stages.</title>
        <authorList>
            <person name="Brosson D."/>
            <person name="Kuhn L."/>
            <person name="Delbac F."/>
            <person name="Garin J."/>
            <person name="Vivares C.P."/>
            <person name="Texier C."/>
        </authorList>
    </citation>
    <scope>IDENTIFICATION BY MASS SPECTROMETRY [LARGE SCALE ANALYSIS]</scope>
    <scope>DEVELOPMENTAL STAGE</scope>
</reference>
<feature type="chain" id="PRO_0000383325" description="Heat shock protein homolog ECU03_0520">
    <location>
        <begin position="1"/>
        <end position="683"/>
    </location>
</feature>
<gene>
    <name type="ordered locus">ECU03_0520</name>
</gene>
<protein>
    <recommendedName>
        <fullName>Heat shock protein homolog ECU03_0520</fullName>
    </recommendedName>
</protein>
<evidence type="ECO:0000250" key="1"/>
<evidence type="ECO:0000269" key="2">
    <source>
    </source>
</evidence>
<evidence type="ECO:0000305" key="3"/>
<organism>
    <name type="scientific">Encephalitozoon cuniculi (strain GB-M1)</name>
    <name type="common">Microsporidian parasite</name>
    <dbReference type="NCBI Taxonomy" id="284813"/>
    <lineage>
        <taxon>Eukaryota</taxon>
        <taxon>Fungi</taxon>
        <taxon>Fungi incertae sedis</taxon>
        <taxon>Microsporidia</taxon>
        <taxon>Unikaryonidae</taxon>
        <taxon>Encephalitozoon</taxon>
    </lineage>
</organism>
<proteinExistence type="evidence at protein level"/>
<accession>Q8SSB1</accession>